<proteinExistence type="inferred from homology"/>
<accession>F5H9N4</accession>
<feature type="chain" id="PRO_0000418280" description="Tegument protein UL24">
    <location>
        <begin position="1"/>
        <end position="358"/>
    </location>
</feature>
<sequence length="358" mass="40186">MEETRAGRYIVRAGSGGQTEDTASGAESVLATLAAVRTRRRSVVCDGPPGSPTDSARHMSDLASLALTAEFGLGCLEAYVRINAGQVLPVVWPPGWNLVLQEIETDEDFKPEDVKAWSHYLCCQTRLAFVGRFVNEGVLSPDQQKKTAVCLISDEGYVFCYVREDTAVYYLARNLMEFARVGLRAVETLHCMRYLTSSLVKRYFRPLLRAWSLGLDTMARFIIRHHGQFMPLTYPPGTELRLCNLRCFENSVEGGHLLRNIKTAFGMRVLGLGTVSLKGENAPFPHLRWPVDLIPIVVAYTGAVYACDVRDDRYIRVGDNLNTFMCLGLNLLFENRRFSGHNGIYDRVPDCPKGRQHR</sequence>
<keyword id="KW-1185">Reference proteome</keyword>
<keyword id="KW-0946">Virion</keyword>
<keyword id="KW-0920">Virion tegument</keyword>
<dbReference type="EMBL" id="AY446894">
    <property type="protein sequence ID" value="AAR31589.2"/>
    <property type="molecule type" value="Genomic_DNA"/>
</dbReference>
<dbReference type="RefSeq" id="YP_081483.2">
    <property type="nucleotide sequence ID" value="NC_006273.2"/>
</dbReference>
<dbReference type="DNASU" id="3077489"/>
<dbReference type="GeneID" id="3077489"/>
<dbReference type="KEGG" id="vg:3077489"/>
<dbReference type="Reactome" id="R-HSA-9609690">
    <property type="pathway name" value="HCMV Early Events"/>
</dbReference>
<dbReference type="Reactome" id="R-HSA-9610379">
    <property type="pathway name" value="HCMV Late Events"/>
</dbReference>
<dbReference type="Proteomes" id="UP000000938">
    <property type="component" value="Segment"/>
</dbReference>
<dbReference type="GO" id="GO:0072517">
    <property type="term" value="C:host cell viral assembly compartment"/>
    <property type="evidence" value="ECO:0000304"/>
    <property type="project" value="Reactome"/>
</dbReference>
<dbReference type="GO" id="GO:0019033">
    <property type="term" value="C:viral tegument"/>
    <property type="evidence" value="ECO:0000304"/>
    <property type="project" value="Reactome"/>
</dbReference>
<dbReference type="InterPro" id="IPR003360">
    <property type="entry name" value="US22-like"/>
</dbReference>
<dbReference type="Pfam" id="PF02393">
    <property type="entry name" value="US22"/>
    <property type="match status" value="2"/>
</dbReference>
<reference key="1">
    <citation type="journal article" date="2004" name="J. Gen. Virol.">
        <title>Genetic content of wild-type human cytomegalovirus.</title>
        <authorList>
            <person name="Dolan A."/>
            <person name="Cunningham C."/>
            <person name="Hector R.D."/>
            <person name="Hassan-Walker A.F."/>
            <person name="Lee L."/>
            <person name="Addison C."/>
            <person name="Dargan D.J."/>
            <person name="McGeoch D.J."/>
            <person name="Gatherer D."/>
            <person name="Emery V.C."/>
            <person name="Griffiths P.D."/>
            <person name="Sinzger C."/>
            <person name="McSharry B.P."/>
            <person name="Wilkinson G.W.G."/>
            <person name="Davison A.J."/>
        </authorList>
    </citation>
    <scope>NUCLEOTIDE SEQUENCE [LARGE SCALE GENOMIC DNA]</scope>
</reference>
<reference key="2">
    <citation type="submission" date="2007-08" db="EMBL/GenBank/DDBJ databases">
        <authorList>
            <person name="Davison A.J."/>
        </authorList>
    </citation>
    <scope>SEQUENCE REVISION</scope>
</reference>
<protein>
    <recommendedName>
        <fullName>Tegument protein UL24</fullName>
    </recommendedName>
</protein>
<comment type="subcellular location">
    <subcellularLocation>
        <location evidence="1">Virion tegument</location>
    </subcellularLocation>
</comment>
<comment type="similarity">
    <text evidence="2">Belongs to the herpesviridae US22 family.</text>
</comment>
<evidence type="ECO:0000250" key="1"/>
<evidence type="ECO:0000305" key="2"/>
<organismHost>
    <name type="scientific">Homo sapiens</name>
    <name type="common">Human</name>
    <dbReference type="NCBI Taxonomy" id="9606"/>
</organismHost>
<name>VP22_HCMVM</name>
<gene>
    <name type="primary">UL24</name>
</gene>
<organism>
    <name type="scientific">Human cytomegalovirus (strain Merlin)</name>
    <name type="common">HHV-5</name>
    <name type="synonym">Human herpesvirus 5</name>
    <dbReference type="NCBI Taxonomy" id="295027"/>
    <lineage>
        <taxon>Viruses</taxon>
        <taxon>Duplodnaviria</taxon>
        <taxon>Heunggongvirae</taxon>
        <taxon>Peploviricota</taxon>
        <taxon>Herviviricetes</taxon>
        <taxon>Herpesvirales</taxon>
        <taxon>Orthoherpesviridae</taxon>
        <taxon>Betaherpesvirinae</taxon>
        <taxon>Cytomegalovirus</taxon>
        <taxon>Cytomegalovirus humanbeta5</taxon>
        <taxon>Human cytomegalovirus</taxon>
    </lineage>
</organism>